<accession>Q0SHY0</accession>
<evidence type="ECO:0000255" key="1">
    <source>
        <dbReference type="HAMAP-Rule" id="MF_00076"/>
    </source>
</evidence>
<reference key="1">
    <citation type="journal article" date="2006" name="Proc. Natl. Acad. Sci. U.S.A.">
        <title>The complete genome of Rhodococcus sp. RHA1 provides insights into a catabolic powerhouse.</title>
        <authorList>
            <person name="McLeod M.P."/>
            <person name="Warren R.L."/>
            <person name="Hsiao W.W.L."/>
            <person name="Araki N."/>
            <person name="Myhre M."/>
            <person name="Fernandes C."/>
            <person name="Miyazawa D."/>
            <person name="Wong W."/>
            <person name="Lillquist A.L."/>
            <person name="Wang D."/>
            <person name="Dosanjh M."/>
            <person name="Hara H."/>
            <person name="Petrescu A."/>
            <person name="Morin R.D."/>
            <person name="Yang G."/>
            <person name="Stott J.M."/>
            <person name="Schein J.E."/>
            <person name="Shin H."/>
            <person name="Smailus D."/>
            <person name="Siddiqui A.S."/>
            <person name="Marra M.A."/>
            <person name="Jones S.J.M."/>
            <person name="Holt R."/>
            <person name="Brinkman F.S.L."/>
            <person name="Miyauchi K."/>
            <person name="Fukuda M."/>
            <person name="Davies J.E."/>
            <person name="Mohn W.W."/>
            <person name="Eltis L.D."/>
        </authorList>
    </citation>
    <scope>NUCLEOTIDE SEQUENCE [LARGE SCALE GENOMIC DNA]</scope>
    <source>
        <strain>RHA1</strain>
    </source>
</reference>
<protein>
    <recommendedName>
        <fullName evidence="1">Imidazoleglycerol-phosphate dehydratase</fullName>
        <shortName evidence="1">IGPD</shortName>
        <ecNumber evidence="1">4.2.1.19</ecNumber>
    </recommendedName>
</protein>
<organism>
    <name type="scientific">Rhodococcus jostii (strain RHA1)</name>
    <dbReference type="NCBI Taxonomy" id="101510"/>
    <lineage>
        <taxon>Bacteria</taxon>
        <taxon>Bacillati</taxon>
        <taxon>Actinomycetota</taxon>
        <taxon>Actinomycetes</taxon>
        <taxon>Mycobacteriales</taxon>
        <taxon>Nocardiaceae</taxon>
        <taxon>Rhodococcus</taxon>
    </lineage>
</organism>
<keyword id="KW-0028">Amino-acid biosynthesis</keyword>
<keyword id="KW-0963">Cytoplasm</keyword>
<keyword id="KW-0368">Histidine biosynthesis</keyword>
<keyword id="KW-0456">Lyase</keyword>
<dbReference type="EC" id="4.2.1.19" evidence="1"/>
<dbReference type="EMBL" id="CP000431">
    <property type="protein sequence ID" value="ABG92856.1"/>
    <property type="molecule type" value="Genomic_DNA"/>
</dbReference>
<dbReference type="RefSeq" id="WP_011594184.1">
    <property type="nucleotide sequence ID" value="NC_008268.1"/>
</dbReference>
<dbReference type="SMR" id="Q0SHY0"/>
<dbReference type="KEGG" id="rha:RHA1_ro01029"/>
<dbReference type="PATRIC" id="fig|101510.16.peg.1049"/>
<dbReference type="eggNOG" id="COG0131">
    <property type="taxonomic scope" value="Bacteria"/>
</dbReference>
<dbReference type="HOGENOM" id="CLU_044308_2_0_11"/>
<dbReference type="OrthoDB" id="9790411at2"/>
<dbReference type="UniPathway" id="UPA00031">
    <property type="reaction ID" value="UER00011"/>
</dbReference>
<dbReference type="Proteomes" id="UP000008710">
    <property type="component" value="Chromosome"/>
</dbReference>
<dbReference type="GO" id="GO:0005737">
    <property type="term" value="C:cytoplasm"/>
    <property type="evidence" value="ECO:0007669"/>
    <property type="project" value="UniProtKB-SubCell"/>
</dbReference>
<dbReference type="GO" id="GO:0004424">
    <property type="term" value="F:imidazoleglycerol-phosphate dehydratase activity"/>
    <property type="evidence" value="ECO:0007669"/>
    <property type="project" value="UniProtKB-UniRule"/>
</dbReference>
<dbReference type="GO" id="GO:0000105">
    <property type="term" value="P:L-histidine biosynthetic process"/>
    <property type="evidence" value="ECO:0007669"/>
    <property type="project" value="UniProtKB-UniRule"/>
</dbReference>
<dbReference type="CDD" id="cd07914">
    <property type="entry name" value="IGPD"/>
    <property type="match status" value="1"/>
</dbReference>
<dbReference type="FunFam" id="3.30.230.40:FF:000001">
    <property type="entry name" value="Imidazoleglycerol-phosphate dehydratase HisB"/>
    <property type="match status" value="1"/>
</dbReference>
<dbReference type="FunFam" id="3.30.230.40:FF:000003">
    <property type="entry name" value="Imidazoleglycerol-phosphate dehydratase HisB"/>
    <property type="match status" value="1"/>
</dbReference>
<dbReference type="Gene3D" id="3.30.230.40">
    <property type="entry name" value="Imidazole glycerol phosphate dehydratase, domain 1"/>
    <property type="match status" value="2"/>
</dbReference>
<dbReference type="HAMAP" id="MF_00076">
    <property type="entry name" value="HisB"/>
    <property type="match status" value="1"/>
</dbReference>
<dbReference type="InterPro" id="IPR038494">
    <property type="entry name" value="IGPD_sf"/>
</dbReference>
<dbReference type="InterPro" id="IPR000807">
    <property type="entry name" value="ImidazoleglycerolP_deHydtase"/>
</dbReference>
<dbReference type="InterPro" id="IPR020565">
    <property type="entry name" value="ImidazoleglycerP_deHydtase_CS"/>
</dbReference>
<dbReference type="InterPro" id="IPR020568">
    <property type="entry name" value="Ribosomal_Su5_D2-typ_SF"/>
</dbReference>
<dbReference type="NCBIfam" id="NF002110">
    <property type="entry name" value="PRK00951.1-6"/>
    <property type="match status" value="1"/>
</dbReference>
<dbReference type="NCBIfam" id="NF002111">
    <property type="entry name" value="PRK00951.2-1"/>
    <property type="match status" value="1"/>
</dbReference>
<dbReference type="NCBIfam" id="NF002114">
    <property type="entry name" value="PRK00951.2-4"/>
    <property type="match status" value="1"/>
</dbReference>
<dbReference type="PANTHER" id="PTHR23133:SF2">
    <property type="entry name" value="IMIDAZOLEGLYCEROL-PHOSPHATE DEHYDRATASE"/>
    <property type="match status" value="1"/>
</dbReference>
<dbReference type="PANTHER" id="PTHR23133">
    <property type="entry name" value="IMIDAZOLEGLYCEROL-PHOSPHATE DEHYDRATASE HIS7"/>
    <property type="match status" value="1"/>
</dbReference>
<dbReference type="Pfam" id="PF00475">
    <property type="entry name" value="IGPD"/>
    <property type="match status" value="1"/>
</dbReference>
<dbReference type="SUPFAM" id="SSF54211">
    <property type="entry name" value="Ribosomal protein S5 domain 2-like"/>
    <property type="match status" value="2"/>
</dbReference>
<dbReference type="PROSITE" id="PS00955">
    <property type="entry name" value="IGP_DEHYDRATASE_2"/>
    <property type="match status" value="1"/>
</dbReference>
<name>HIS7_RHOJR</name>
<proteinExistence type="inferred from homology"/>
<sequence>MTDRIARVERTTKESSITVELNLDGTGIVDVSTGVPFFDHMLTALGSHASFDLTVHAKGDIEIEAHHTVEDTSIVLGQALGQALGDKKGIRRFGDAFIPMDETLAHASVDVSGRPYCVHTGEPEHLLHSVIGGYPGVPYATVINRHVFESIALNARIALHVRVLYGRDQHHITEAEFKAVARALREAVEPDPRVTGVPSTKGSL</sequence>
<feature type="chain" id="PRO_0000336339" description="Imidazoleglycerol-phosphate dehydratase">
    <location>
        <begin position="1"/>
        <end position="204"/>
    </location>
</feature>
<gene>
    <name evidence="1" type="primary">hisB</name>
    <name type="ordered locus">RHA1_ro01029</name>
</gene>
<comment type="catalytic activity">
    <reaction evidence="1">
        <text>D-erythro-1-(imidazol-4-yl)glycerol 3-phosphate = 3-(imidazol-4-yl)-2-oxopropyl phosphate + H2O</text>
        <dbReference type="Rhea" id="RHEA:11040"/>
        <dbReference type="ChEBI" id="CHEBI:15377"/>
        <dbReference type="ChEBI" id="CHEBI:57766"/>
        <dbReference type="ChEBI" id="CHEBI:58278"/>
        <dbReference type="EC" id="4.2.1.19"/>
    </reaction>
</comment>
<comment type="pathway">
    <text evidence="1">Amino-acid biosynthesis; L-histidine biosynthesis; L-histidine from 5-phospho-alpha-D-ribose 1-diphosphate: step 6/9.</text>
</comment>
<comment type="subcellular location">
    <subcellularLocation>
        <location evidence="1">Cytoplasm</location>
    </subcellularLocation>
</comment>
<comment type="similarity">
    <text evidence="1">Belongs to the imidazoleglycerol-phosphate dehydratase family.</text>
</comment>